<evidence type="ECO:0000255" key="1"/>
<evidence type="ECO:0000255" key="2">
    <source>
        <dbReference type="PROSITE-ProRule" id="PRU00434"/>
    </source>
</evidence>
<evidence type="ECO:0000256" key="3">
    <source>
        <dbReference type="SAM" id="MobiDB-lite"/>
    </source>
</evidence>
<evidence type="ECO:0000269" key="4">
    <source>
    </source>
</evidence>
<evidence type="ECO:0000303" key="5">
    <source>
    </source>
</evidence>
<evidence type="ECO:0000303" key="6">
    <source>
    </source>
</evidence>
<evidence type="ECO:0000305" key="7"/>
<evidence type="ECO:0000312" key="8">
    <source>
        <dbReference type="EMBL" id="ABB47708.1"/>
    </source>
</evidence>
<evidence type="ECO:0000312" key="9">
    <source>
        <dbReference type="EMBL" id="BAF26615.1"/>
    </source>
</evidence>
<evidence type="ECO:0000312" key="10">
    <source>
        <dbReference type="EMBL" id="BAT11049.1"/>
    </source>
</evidence>
<evidence type="ECO:0000312" key="11">
    <source>
        <dbReference type="EMBL" id="EEE51032.1"/>
    </source>
</evidence>
<organism evidence="11">
    <name type="scientific">Oryza sativa subsp. japonica</name>
    <name type="common">Rice</name>
    <dbReference type="NCBI Taxonomy" id="39947"/>
    <lineage>
        <taxon>Eukaryota</taxon>
        <taxon>Viridiplantae</taxon>
        <taxon>Streptophyta</taxon>
        <taxon>Embryophyta</taxon>
        <taxon>Tracheophyta</taxon>
        <taxon>Spermatophyta</taxon>
        <taxon>Magnoliopsida</taxon>
        <taxon>Liliopsida</taxon>
        <taxon>Poales</taxon>
        <taxon>Poaceae</taxon>
        <taxon>BOP clade</taxon>
        <taxon>Oryzoideae</taxon>
        <taxon>Oryzeae</taxon>
        <taxon>Oryzinae</taxon>
        <taxon>Oryza</taxon>
        <taxon>Oryza sativa</taxon>
    </lineage>
</organism>
<dbReference type="EMBL" id="DP000086">
    <property type="protein sequence ID" value="ABB47708.1"/>
    <property type="status" value="ALT_SEQ"/>
    <property type="molecule type" value="Genomic_DNA"/>
</dbReference>
<dbReference type="EMBL" id="DP000086">
    <property type="protein sequence ID" value="ABB47709.1"/>
    <property type="status" value="ALT_SEQ"/>
    <property type="molecule type" value="Genomic_DNA"/>
</dbReference>
<dbReference type="EMBL" id="AP008216">
    <property type="protein sequence ID" value="BAF26615.1"/>
    <property type="status" value="ALT_SEQ"/>
    <property type="molecule type" value="Genomic_DNA"/>
</dbReference>
<dbReference type="EMBL" id="AP014966">
    <property type="protein sequence ID" value="BAT11049.1"/>
    <property type="status" value="ALT_SEQ"/>
    <property type="molecule type" value="Genomic_DNA"/>
</dbReference>
<dbReference type="EMBL" id="CM000147">
    <property type="protein sequence ID" value="EEE51032.1"/>
    <property type="molecule type" value="Genomic_DNA"/>
</dbReference>
<dbReference type="SMR" id="B9G5Y5"/>
<dbReference type="STRING" id="39947.B9G5Y5"/>
<dbReference type="PaxDb" id="39947-B9G5Y5"/>
<dbReference type="KEGG" id="dosa:Os10g0442900"/>
<dbReference type="eggNOG" id="KOG0061">
    <property type="taxonomic scope" value="Eukaryota"/>
</dbReference>
<dbReference type="HOGENOM" id="CLU_000604_57_0_1"/>
<dbReference type="InParanoid" id="B9G5Y5"/>
<dbReference type="Proteomes" id="UP000000763">
    <property type="component" value="Chromosome 10"/>
</dbReference>
<dbReference type="Proteomes" id="UP000007752">
    <property type="component" value="Chromosome 10"/>
</dbReference>
<dbReference type="Proteomes" id="UP000059680">
    <property type="component" value="Chromosome 10"/>
</dbReference>
<dbReference type="GO" id="GO:0016020">
    <property type="term" value="C:membrane"/>
    <property type="evidence" value="ECO:0000318"/>
    <property type="project" value="GO_Central"/>
</dbReference>
<dbReference type="GO" id="GO:0140359">
    <property type="term" value="F:ABC-type transporter activity"/>
    <property type="evidence" value="ECO:0007669"/>
    <property type="project" value="InterPro"/>
</dbReference>
<dbReference type="GO" id="GO:0005524">
    <property type="term" value="F:ATP binding"/>
    <property type="evidence" value="ECO:0007669"/>
    <property type="project" value="UniProtKB-KW"/>
</dbReference>
<dbReference type="GO" id="GO:0016887">
    <property type="term" value="F:ATP hydrolysis activity"/>
    <property type="evidence" value="ECO:0007669"/>
    <property type="project" value="InterPro"/>
</dbReference>
<dbReference type="GO" id="GO:0042626">
    <property type="term" value="F:ATPase-coupled transmembrane transporter activity"/>
    <property type="evidence" value="ECO:0000318"/>
    <property type="project" value="GO_Central"/>
</dbReference>
<dbReference type="GO" id="GO:0055085">
    <property type="term" value="P:transmembrane transport"/>
    <property type="evidence" value="ECO:0000318"/>
    <property type="project" value="GO_Central"/>
</dbReference>
<dbReference type="CDD" id="cd03213">
    <property type="entry name" value="ABCG_EPDR"/>
    <property type="match status" value="1"/>
</dbReference>
<dbReference type="FunFam" id="3.40.50.300:FF:000367">
    <property type="entry name" value="ABC transporter G family member 24"/>
    <property type="match status" value="1"/>
</dbReference>
<dbReference type="Gene3D" id="3.40.50.300">
    <property type="entry name" value="P-loop containing nucleotide triphosphate hydrolases"/>
    <property type="match status" value="1"/>
</dbReference>
<dbReference type="InterPro" id="IPR003593">
    <property type="entry name" value="AAA+_ATPase"/>
</dbReference>
<dbReference type="InterPro" id="IPR003439">
    <property type="entry name" value="ABC_transporter-like_ATP-bd"/>
</dbReference>
<dbReference type="InterPro" id="IPR017871">
    <property type="entry name" value="ABC_transporter-like_CS"/>
</dbReference>
<dbReference type="InterPro" id="IPR043926">
    <property type="entry name" value="ABCG_dom"/>
</dbReference>
<dbReference type="InterPro" id="IPR050352">
    <property type="entry name" value="ABCG_transporters"/>
</dbReference>
<dbReference type="InterPro" id="IPR027417">
    <property type="entry name" value="P-loop_NTPase"/>
</dbReference>
<dbReference type="PANTHER" id="PTHR48041:SF14">
    <property type="entry name" value="ABC TRANSPORTER G FAMILY MEMBER 25"/>
    <property type="match status" value="1"/>
</dbReference>
<dbReference type="PANTHER" id="PTHR48041">
    <property type="entry name" value="ABC TRANSPORTER G FAMILY MEMBER 28"/>
    <property type="match status" value="1"/>
</dbReference>
<dbReference type="Pfam" id="PF19055">
    <property type="entry name" value="ABC2_membrane_7"/>
    <property type="match status" value="1"/>
</dbReference>
<dbReference type="Pfam" id="PF00005">
    <property type="entry name" value="ABC_tran"/>
    <property type="match status" value="1"/>
</dbReference>
<dbReference type="SMART" id="SM00382">
    <property type="entry name" value="AAA"/>
    <property type="match status" value="1"/>
</dbReference>
<dbReference type="SUPFAM" id="SSF52540">
    <property type="entry name" value="P-loop containing nucleoside triphosphate hydrolases"/>
    <property type="match status" value="1"/>
</dbReference>
<dbReference type="PROSITE" id="PS00211">
    <property type="entry name" value="ABC_TRANSPORTER_1"/>
    <property type="match status" value="1"/>
</dbReference>
<dbReference type="PROSITE" id="PS50893">
    <property type="entry name" value="ABC_TRANSPORTER_2"/>
    <property type="match status" value="1"/>
</dbReference>
<comment type="subcellular location">
    <subcellularLocation>
        <location evidence="1">Membrane</location>
        <topology evidence="1">Multi-pass membrane protein</topology>
    </subcellularLocation>
</comment>
<comment type="induction">
    <text evidence="4">Up-regulated in shoots by cold, heat, salicylic acid and 1-aminocyclopropane-1-carboxylic acid (ACC). Down-regulated in shoots by mannitol, abscisic acid, kinetin, benzylaminopurine, indole-3-acetic acid and gibberellic acid. Up-regulated in roots by clod, salt, jasmonic acid, salicylic acid, ACC and benzylaminopurine. Down-regulated in roots by indole-3-acetic acid and gibberellic acid.</text>
</comment>
<comment type="similarity">
    <text evidence="7">Belongs to the ABC transporter superfamily. ABCG family. Eye pigment precursor importer (TC 3.A.1.204) subfamily.</text>
</comment>
<comment type="sequence caution" evidence="7">
    <conflict type="erroneous gene model prediction">
        <sequence resource="EMBL-CDS" id="ABB47708"/>
    </conflict>
</comment>
<comment type="sequence caution" evidence="7">
    <conflict type="erroneous gene model prediction">
        <sequence resource="EMBL-CDS" id="ABB47709"/>
    </conflict>
</comment>
<comment type="sequence caution" evidence="7">
    <conflict type="erroneous gene model prediction">
        <sequence resource="EMBL-CDS" id="BAF26615"/>
    </conflict>
</comment>
<comment type="sequence caution" evidence="7">
    <conflict type="erroneous gene model prediction">
        <sequence resource="EMBL-CDS" id="BAT11049"/>
    </conflict>
</comment>
<keyword id="KW-0067">ATP-binding</keyword>
<keyword id="KW-0472">Membrane</keyword>
<keyword id="KW-0547">Nucleotide-binding</keyword>
<keyword id="KW-1185">Reference proteome</keyword>
<keyword id="KW-0732">Signal</keyword>
<keyword id="KW-0812">Transmembrane</keyword>
<keyword id="KW-1133">Transmembrane helix</keyword>
<keyword id="KW-0813">Transport</keyword>
<protein>
    <recommendedName>
        <fullName evidence="5">ABC transporter G family member 25</fullName>
        <shortName evidence="5">OsABCG25</shortName>
    </recommendedName>
    <alternativeName>
        <fullName evidence="6">Putative white-brown complex homolog protein 26</fullName>
        <shortName evidence="6">OsWBC26</shortName>
    </alternativeName>
</protein>
<sequence length="1004" mass="110748">MAASQLLAAAVAAAVFLAALLVPPARCQQQQVANPGPRVRQAARIDAVRDELAAEVQAKYGFCMANVQEDFTQAFSFSNASFVSDCMEETQGQMTGMLCGKAEIEIYVKSLGKKPSTRVSRNCDQNSWALGCQPGWACARQDSSSSGREVPSRAVNCRPCYPGFFCPRGLTCMIPCPLGAYCPLATLNDTTGLCDPYSYQITPGSNTACGTADSWADVITTDDVFCPPGHHCPTTTQKFNCTEGYYCRKGSTEEHKCIWKNTCKENSTKEATALFGGILIVILSVVLLLVYNCSDQFIKIRAKILSKSRRKAATIAQESATARGRWKLAKELVLSHELEMSESDQLAASSNEARHATEGNGKRSKNRKKLAHARTERFRRAYSQIGRERVLQPDNDKITLSGVVALAAENRSRRPMFEVVFKGLTLSIGKKKLLQCVTGKLSPGRVTAIMGPSGAGKTTFLNAVLGKTTGYKKDGLVLINGKSGSMQSYKKIIGFVPQDDIVHGNLTVEENLWFSACCRSSKGMSKSDKIIVLERVIGSLGLQEIRNSLVGTVEKRGISGGQRKRVNVGIEMVMEPSLLILDEPTTGLDSASSQLLLRALRHEALQGVNVCAVIHQPSYTLFNMFDDFVLLARGGLIAYLGPISEVETYFSSLGIKVPERENPPDYYIDILEGITKTKMRGHAAPKHLPLLWMLRNGYEVPEYMQKDLEDINNVHELYTVGSMSREESFGDQSENADSVHQNVREPYSLLDRKTPGVLAQYKYYLGRVTKQRLREATLQAVDYLILCIAGICIGTIAKVKDDTFGVASYGYTIIAVSLLCQLAALRSFSPERLQYWRERESGMSTLAYFLARDTIDHFNTLVKPVAFLSTFYFFNNPRSEFKDNYLVFLALVYCVTGIGYTFAIWFELGLAQLCSALIPVVLVLVGTQPNIPNFIKGLCYPKWALEALIIAGAKKYSGVWLITRCGALLKGGYDINNFVLCIVIVMLMGVLFRFIALLSLLKLK</sequence>
<gene>
    <name evidence="5" type="primary">ABCG25</name>
    <name evidence="6" type="synonym">WBC26</name>
    <name evidence="8" type="ordered locus">LOC_Os10g30610</name>
    <name evidence="9" type="ordered locus">Os10g0442900</name>
    <name evidence="10" type="ordered locus">Os10g0442950</name>
    <name evidence="11" type="ORF">OsJ_31680</name>
</gene>
<name>AB25G_ORYSJ</name>
<proteinExistence type="evidence at transcript level"/>
<accession>B9G5Y5</accession>
<accession>A0A0P0XVM6</accession>
<accession>Q0IXF0</accession>
<accession>Q337T0</accession>
<reference key="1">
    <citation type="journal article" date="2003" name="Science">
        <title>In-depth view of structure, activity, and evolution of rice chromosome 10.</title>
        <authorList>
            <person name="Yu Y."/>
            <person name="Rambo T."/>
            <person name="Currie J."/>
            <person name="Saski C."/>
            <person name="Kim H.-R."/>
            <person name="Collura K."/>
            <person name="Thompson S."/>
            <person name="Simmons J."/>
            <person name="Yang T.-J."/>
            <person name="Nah G."/>
            <person name="Patel A.J."/>
            <person name="Thurmond S."/>
            <person name="Henry D."/>
            <person name="Oates R."/>
            <person name="Palmer M."/>
            <person name="Pries G."/>
            <person name="Gibson J."/>
            <person name="Anderson H."/>
            <person name="Paradkar M."/>
            <person name="Crane L."/>
            <person name="Dale J."/>
            <person name="Carver M.B."/>
            <person name="Wood T."/>
            <person name="Frisch D."/>
            <person name="Engler F."/>
            <person name="Soderlund C."/>
            <person name="Palmer L.E."/>
            <person name="Teytelman L."/>
            <person name="Nascimento L."/>
            <person name="De la Bastide M."/>
            <person name="Spiegel L."/>
            <person name="Ware D."/>
            <person name="O'Shaughnessy A."/>
            <person name="Dike S."/>
            <person name="Dedhia N."/>
            <person name="Preston R."/>
            <person name="Huang E."/>
            <person name="Ferraro K."/>
            <person name="Kuit K."/>
            <person name="Miller B."/>
            <person name="Zutavern T."/>
            <person name="Katzenberger F."/>
            <person name="Muller S."/>
            <person name="Balija V."/>
            <person name="Martienssen R.A."/>
            <person name="Stein L."/>
            <person name="Minx P."/>
            <person name="Johnson D."/>
            <person name="Cordum H."/>
            <person name="Mardis E."/>
            <person name="Cheng Z."/>
            <person name="Jiang J."/>
            <person name="Wilson R."/>
            <person name="McCombie W.R."/>
            <person name="Wing R.A."/>
            <person name="Yuan Q."/>
            <person name="Ouyang S."/>
            <person name="Liu J."/>
            <person name="Jones K.M."/>
            <person name="Gansberger K."/>
            <person name="Moffat K."/>
            <person name="Hill J."/>
            <person name="Tsitrin T."/>
            <person name="Overton L."/>
            <person name="Bera J."/>
            <person name="Kim M."/>
            <person name="Jin S."/>
            <person name="Tallon L."/>
            <person name="Ciecko A."/>
            <person name="Pai G."/>
            <person name="Van Aken S."/>
            <person name="Utterback T."/>
            <person name="Reidmuller S."/>
            <person name="Bormann J."/>
            <person name="Feldblyum T."/>
            <person name="Hsiao J."/>
            <person name="Zismann V."/>
            <person name="Blunt S."/>
            <person name="de Vazeille A.R."/>
            <person name="Shaffer T."/>
            <person name="Koo H."/>
            <person name="Suh B."/>
            <person name="Yang Q."/>
            <person name="Haas B."/>
            <person name="Peterson J."/>
            <person name="Pertea M."/>
            <person name="Volfovsky N."/>
            <person name="Wortman J."/>
            <person name="White O."/>
            <person name="Salzberg S.L."/>
            <person name="Fraser C.M."/>
            <person name="Buell C.R."/>
            <person name="Messing J."/>
            <person name="Song R."/>
            <person name="Fuks G."/>
            <person name="Llaca V."/>
            <person name="Kovchak S."/>
            <person name="Young S."/>
            <person name="Bowers J.E."/>
            <person name="Paterson A.H."/>
            <person name="Johns M.A."/>
            <person name="Mao L."/>
            <person name="Pan H."/>
            <person name="Dean R.A."/>
        </authorList>
    </citation>
    <scope>NUCLEOTIDE SEQUENCE [LARGE SCALE GENOMIC DNA]</scope>
    <source>
        <strain>cv. Nipponbare</strain>
    </source>
</reference>
<reference key="2">
    <citation type="journal article" date="2005" name="Nature">
        <title>The map-based sequence of the rice genome.</title>
        <authorList>
            <consortium name="International rice genome sequencing project (IRGSP)"/>
        </authorList>
    </citation>
    <scope>NUCLEOTIDE SEQUENCE [LARGE SCALE GENOMIC DNA]</scope>
    <source>
        <strain>cv. Nipponbare</strain>
    </source>
</reference>
<reference key="3">
    <citation type="journal article" date="2008" name="Nucleic Acids Res.">
        <title>The rice annotation project database (RAP-DB): 2008 update.</title>
        <authorList>
            <consortium name="The rice annotation project (RAP)"/>
        </authorList>
    </citation>
    <scope>GENOME REANNOTATION</scope>
    <source>
        <strain>cv. Nipponbare</strain>
    </source>
</reference>
<reference key="4">
    <citation type="journal article" date="2013" name="Rice">
        <title>Improvement of the Oryza sativa Nipponbare reference genome using next generation sequence and optical map data.</title>
        <authorList>
            <person name="Kawahara Y."/>
            <person name="de la Bastide M."/>
            <person name="Hamilton J.P."/>
            <person name="Kanamori H."/>
            <person name="McCombie W.R."/>
            <person name="Ouyang S."/>
            <person name="Schwartz D.C."/>
            <person name="Tanaka T."/>
            <person name="Wu J."/>
            <person name="Zhou S."/>
            <person name="Childs K.L."/>
            <person name="Davidson R.M."/>
            <person name="Lin H."/>
            <person name="Quesada-Ocampo L."/>
            <person name="Vaillancourt B."/>
            <person name="Sakai H."/>
            <person name="Lee S.S."/>
            <person name="Kim J."/>
            <person name="Numa H."/>
            <person name="Itoh T."/>
            <person name="Buell C.R."/>
            <person name="Matsumoto T."/>
        </authorList>
    </citation>
    <scope>GENOME REANNOTATION</scope>
    <source>
        <strain>cv. Nipponbare</strain>
    </source>
</reference>
<reference key="5">
    <citation type="journal article" date="2005" name="PLoS Biol.">
        <title>The genomes of Oryza sativa: a history of duplications.</title>
        <authorList>
            <person name="Yu J."/>
            <person name="Wang J."/>
            <person name="Lin W."/>
            <person name="Li S."/>
            <person name="Li H."/>
            <person name="Zhou J."/>
            <person name="Ni P."/>
            <person name="Dong W."/>
            <person name="Hu S."/>
            <person name="Zeng C."/>
            <person name="Zhang J."/>
            <person name="Zhang Y."/>
            <person name="Li R."/>
            <person name="Xu Z."/>
            <person name="Li S."/>
            <person name="Li X."/>
            <person name="Zheng H."/>
            <person name="Cong L."/>
            <person name="Lin L."/>
            <person name="Yin J."/>
            <person name="Geng J."/>
            <person name="Li G."/>
            <person name="Shi J."/>
            <person name="Liu J."/>
            <person name="Lv H."/>
            <person name="Li J."/>
            <person name="Wang J."/>
            <person name="Deng Y."/>
            <person name="Ran L."/>
            <person name="Shi X."/>
            <person name="Wang X."/>
            <person name="Wu Q."/>
            <person name="Li C."/>
            <person name="Ren X."/>
            <person name="Wang J."/>
            <person name="Wang X."/>
            <person name="Li D."/>
            <person name="Liu D."/>
            <person name="Zhang X."/>
            <person name="Ji Z."/>
            <person name="Zhao W."/>
            <person name="Sun Y."/>
            <person name="Zhang Z."/>
            <person name="Bao J."/>
            <person name="Han Y."/>
            <person name="Dong L."/>
            <person name="Ji J."/>
            <person name="Chen P."/>
            <person name="Wu S."/>
            <person name="Liu J."/>
            <person name="Xiao Y."/>
            <person name="Bu D."/>
            <person name="Tan J."/>
            <person name="Yang L."/>
            <person name="Ye C."/>
            <person name="Zhang J."/>
            <person name="Xu J."/>
            <person name="Zhou Y."/>
            <person name="Yu Y."/>
            <person name="Zhang B."/>
            <person name="Zhuang S."/>
            <person name="Wei H."/>
            <person name="Liu B."/>
            <person name="Lei M."/>
            <person name="Yu H."/>
            <person name="Li Y."/>
            <person name="Xu H."/>
            <person name="Wei S."/>
            <person name="He X."/>
            <person name="Fang L."/>
            <person name="Zhang Z."/>
            <person name="Zhang Y."/>
            <person name="Huang X."/>
            <person name="Su Z."/>
            <person name="Tong W."/>
            <person name="Li J."/>
            <person name="Tong Z."/>
            <person name="Li S."/>
            <person name="Ye J."/>
            <person name="Wang L."/>
            <person name="Fang L."/>
            <person name="Lei T."/>
            <person name="Chen C.-S."/>
            <person name="Chen H.-C."/>
            <person name="Xu Z."/>
            <person name="Li H."/>
            <person name="Huang H."/>
            <person name="Zhang F."/>
            <person name="Xu H."/>
            <person name="Li N."/>
            <person name="Zhao C."/>
            <person name="Li S."/>
            <person name="Dong L."/>
            <person name="Huang Y."/>
            <person name="Li L."/>
            <person name="Xi Y."/>
            <person name="Qi Q."/>
            <person name="Li W."/>
            <person name="Zhang B."/>
            <person name="Hu W."/>
            <person name="Zhang Y."/>
            <person name="Tian X."/>
            <person name="Jiao Y."/>
            <person name="Liang X."/>
            <person name="Jin J."/>
            <person name="Gao L."/>
            <person name="Zheng W."/>
            <person name="Hao B."/>
            <person name="Liu S.-M."/>
            <person name="Wang W."/>
            <person name="Yuan L."/>
            <person name="Cao M."/>
            <person name="McDermott J."/>
            <person name="Samudrala R."/>
            <person name="Wang J."/>
            <person name="Wong G.K.-S."/>
            <person name="Yang H."/>
        </authorList>
    </citation>
    <scope>NUCLEOTIDE SEQUENCE [LARGE SCALE GENOMIC DNA]</scope>
    <source>
        <strain>cv. Nipponbare</strain>
    </source>
</reference>
<reference key="6">
    <citation type="journal article" date="2008" name="Trends Plant Sci.">
        <title>Plant ABC proteins - a unified nomenclature and updated inventory.</title>
        <authorList>
            <person name="Verrier P.J."/>
            <person name="Bird D."/>
            <person name="Burla B."/>
            <person name="Dassa E."/>
            <person name="Forestier C."/>
            <person name="Geisler M."/>
            <person name="Klein M."/>
            <person name="Kolukisaoglu H.U."/>
            <person name="Lee Y."/>
            <person name="Martinoia E."/>
            <person name="Murphy A."/>
            <person name="Rea P.A."/>
            <person name="Samuels L."/>
            <person name="Schulz B."/>
            <person name="Spalding E.J."/>
            <person name="Yazaki K."/>
            <person name="Theodoulou F.L."/>
        </authorList>
    </citation>
    <scope>GENE FAMILY</scope>
    <scope>NOMENCLATURE</scope>
</reference>
<reference key="7">
    <citation type="journal article" date="2012" name="Mol. Genet. Genomics">
        <title>Genome-wide analysis and expression profiling of half-size ABC protein subgroup G in rice in response to abiotic stress and phytohormone treatments.</title>
        <authorList>
            <person name="Matsuda S."/>
            <person name="Funabiki A."/>
            <person name="Furukawa K."/>
            <person name="Komori N."/>
            <person name="Koike M."/>
            <person name="Tokuji Y."/>
            <person name="Takamure I."/>
            <person name="Kato K."/>
        </authorList>
    </citation>
    <scope>GENE FAMILY</scope>
    <scope>NOMENCLATURE</scope>
    <scope>INDUCTION BY ABIOTIC STRESS AND HORMONES</scope>
</reference>
<reference key="8">
    <citation type="journal article" date="2015" name="Comput. Biol. Chem.">
        <title>Molecular phylogenetic study and expression analysis of ATP-binding cassette transporter gene family in Oryza sativa in response to salt stress.</title>
        <authorList>
            <person name="Saha J."/>
            <person name="Sengupta A."/>
            <person name="Gupta K."/>
            <person name="Gupta B."/>
        </authorList>
    </citation>
    <scope>GENE FAMILY</scope>
</reference>
<feature type="signal peptide" evidence="1">
    <location>
        <begin position="1"/>
        <end position="27"/>
    </location>
</feature>
<feature type="chain" id="PRO_5002884587" description="ABC transporter G family member 25" evidence="1">
    <location>
        <begin position="28"/>
        <end position="1004"/>
    </location>
</feature>
<feature type="transmembrane region" description="Helical" evidence="1">
    <location>
        <begin position="271"/>
        <end position="291"/>
    </location>
</feature>
<feature type="transmembrane region" description="Helical" evidence="1">
    <location>
        <begin position="776"/>
        <end position="796"/>
    </location>
</feature>
<feature type="transmembrane region" description="Helical" evidence="1">
    <location>
        <begin position="804"/>
        <end position="824"/>
    </location>
</feature>
<feature type="transmembrane region" description="Helical" evidence="1">
    <location>
        <begin position="886"/>
        <end position="906"/>
    </location>
</feature>
<feature type="transmembrane region" description="Helical" evidence="1">
    <location>
        <begin position="907"/>
        <end position="927"/>
    </location>
</feature>
<feature type="transmembrane region" description="Helical" evidence="1">
    <location>
        <begin position="943"/>
        <end position="963"/>
    </location>
</feature>
<feature type="transmembrane region" description="Helical" evidence="1">
    <location>
        <begin position="978"/>
        <end position="998"/>
    </location>
</feature>
<feature type="domain" description="ABC transporter" evidence="2">
    <location>
        <begin position="419"/>
        <end position="659"/>
    </location>
</feature>
<feature type="region of interest" description="Disordered" evidence="3">
    <location>
        <begin position="343"/>
        <end position="373"/>
    </location>
</feature>
<feature type="compositionally biased region" description="Basic and acidic residues" evidence="3">
    <location>
        <begin position="352"/>
        <end position="361"/>
    </location>
</feature>
<feature type="compositionally biased region" description="Basic residues" evidence="3">
    <location>
        <begin position="362"/>
        <end position="372"/>
    </location>
</feature>
<feature type="binding site" evidence="2">
    <location>
        <begin position="451"/>
        <end position="458"/>
    </location>
    <ligand>
        <name>ATP</name>
        <dbReference type="ChEBI" id="CHEBI:30616"/>
    </ligand>
</feature>